<proteinExistence type="inferred from homology"/>
<protein>
    <recommendedName>
        <fullName evidence="1">Small ribosomal subunit protein uS17</fullName>
    </recommendedName>
    <alternativeName>
        <fullName evidence="2">30S ribosomal protein S17</fullName>
    </alternativeName>
</protein>
<comment type="function">
    <text evidence="1">One of the primary rRNA binding proteins, it binds specifically to the 5'-end of 16S ribosomal RNA.</text>
</comment>
<comment type="subunit">
    <text evidence="1">Part of the 30S ribosomal subunit.</text>
</comment>
<comment type="similarity">
    <text evidence="1">Belongs to the universal ribosomal protein uS17 family.</text>
</comment>
<dbReference type="EMBL" id="BA000001">
    <property type="protein sequence ID" value="BAA30885.1"/>
    <property type="molecule type" value="Genomic_DNA"/>
</dbReference>
<dbReference type="PIR" id="F71186">
    <property type="entry name" value="F71186"/>
</dbReference>
<dbReference type="SMR" id="O59426"/>
<dbReference type="STRING" id="70601.gene:9378768"/>
<dbReference type="EnsemblBacteria" id="BAA30885">
    <property type="protein sequence ID" value="BAA30885"/>
    <property type="gene ID" value="BAA30885"/>
</dbReference>
<dbReference type="KEGG" id="pho:PH1770"/>
<dbReference type="eggNOG" id="arCOG04096">
    <property type="taxonomic scope" value="Archaea"/>
</dbReference>
<dbReference type="Proteomes" id="UP000000752">
    <property type="component" value="Chromosome"/>
</dbReference>
<dbReference type="GO" id="GO:0022627">
    <property type="term" value="C:cytosolic small ribosomal subunit"/>
    <property type="evidence" value="ECO:0007669"/>
    <property type="project" value="TreeGrafter"/>
</dbReference>
<dbReference type="GO" id="GO:0019843">
    <property type="term" value="F:rRNA binding"/>
    <property type="evidence" value="ECO:0007669"/>
    <property type="project" value="UniProtKB-UniRule"/>
</dbReference>
<dbReference type="GO" id="GO:0003735">
    <property type="term" value="F:structural constituent of ribosome"/>
    <property type="evidence" value="ECO:0007669"/>
    <property type="project" value="InterPro"/>
</dbReference>
<dbReference type="GO" id="GO:0006412">
    <property type="term" value="P:translation"/>
    <property type="evidence" value="ECO:0007669"/>
    <property type="project" value="UniProtKB-UniRule"/>
</dbReference>
<dbReference type="CDD" id="cd00364">
    <property type="entry name" value="Ribosomal_uS17"/>
    <property type="match status" value="1"/>
</dbReference>
<dbReference type="FunFam" id="2.40.50.1000:FF:000005">
    <property type="entry name" value="30S ribosomal protein S17"/>
    <property type="match status" value="1"/>
</dbReference>
<dbReference type="Gene3D" id="2.40.50.1000">
    <property type="match status" value="1"/>
</dbReference>
<dbReference type="HAMAP" id="MF_01345_A">
    <property type="entry name" value="Ribosomal_uS17_A"/>
    <property type="match status" value="1"/>
</dbReference>
<dbReference type="InterPro" id="IPR012340">
    <property type="entry name" value="NA-bd_OB-fold"/>
</dbReference>
<dbReference type="InterPro" id="IPR000266">
    <property type="entry name" value="Ribosomal_uS17"/>
</dbReference>
<dbReference type="InterPro" id="IPR028333">
    <property type="entry name" value="Ribosomal_uS17_arc/euk"/>
</dbReference>
<dbReference type="InterPro" id="IPR019978">
    <property type="entry name" value="Ribosomal_uS17_archaeal"/>
</dbReference>
<dbReference type="InterPro" id="IPR019979">
    <property type="entry name" value="Ribosomal_uS17_CS"/>
</dbReference>
<dbReference type="NCBIfam" id="NF006345">
    <property type="entry name" value="PRK08572.1"/>
    <property type="match status" value="1"/>
</dbReference>
<dbReference type="NCBIfam" id="TIGR03630">
    <property type="entry name" value="uS17_arch"/>
    <property type="match status" value="1"/>
</dbReference>
<dbReference type="PANTHER" id="PTHR10744">
    <property type="entry name" value="40S RIBOSOMAL PROTEIN S11 FAMILY MEMBER"/>
    <property type="match status" value="1"/>
</dbReference>
<dbReference type="PANTHER" id="PTHR10744:SF9">
    <property type="entry name" value="40S RIBOSOMAL PROTEIN S11-RELATED"/>
    <property type="match status" value="1"/>
</dbReference>
<dbReference type="Pfam" id="PF00366">
    <property type="entry name" value="Ribosomal_S17"/>
    <property type="match status" value="1"/>
</dbReference>
<dbReference type="PRINTS" id="PR00973">
    <property type="entry name" value="RIBOSOMALS17"/>
</dbReference>
<dbReference type="SUPFAM" id="SSF50249">
    <property type="entry name" value="Nucleic acid-binding proteins"/>
    <property type="match status" value="1"/>
</dbReference>
<dbReference type="PROSITE" id="PS00056">
    <property type="entry name" value="RIBOSOMAL_S17"/>
    <property type="match status" value="1"/>
</dbReference>
<reference key="1">
    <citation type="journal article" date="1998" name="DNA Res.">
        <title>Complete sequence and gene organization of the genome of a hyper-thermophilic archaebacterium, Pyrococcus horikoshii OT3.</title>
        <authorList>
            <person name="Kawarabayasi Y."/>
            <person name="Sawada M."/>
            <person name="Horikawa H."/>
            <person name="Haikawa Y."/>
            <person name="Hino Y."/>
            <person name="Yamamoto S."/>
            <person name="Sekine M."/>
            <person name="Baba S."/>
            <person name="Kosugi H."/>
            <person name="Hosoyama A."/>
            <person name="Nagai Y."/>
            <person name="Sakai M."/>
            <person name="Ogura K."/>
            <person name="Otsuka R."/>
            <person name="Nakazawa H."/>
            <person name="Takamiya M."/>
            <person name="Ohfuku Y."/>
            <person name="Funahashi T."/>
            <person name="Tanaka T."/>
            <person name="Kudoh Y."/>
            <person name="Yamazaki J."/>
            <person name="Kushida N."/>
            <person name="Oguchi A."/>
            <person name="Aoki K."/>
            <person name="Yoshizawa T."/>
            <person name="Nakamura Y."/>
            <person name="Robb F.T."/>
            <person name="Horikoshi K."/>
            <person name="Masuchi Y."/>
            <person name="Shizuya H."/>
            <person name="Kikuchi H."/>
        </authorList>
    </citation>
    <scope>NUCLEOTIDE SEQUENCE [LARGE SCALE GENOMIC DNA]</scope>
    <source>
        <strain>ATCC 700860 / DSM 12428 / JCM 9974 / NBRC 100139 / OT-3</strain>
    </source>
</reference>
<feature type="chain" id="PRO_0000128503" description="Small ribosomal subunit protein uS17">
    <location>
        <begin position="1"/>
        <end position="116"/>
    </location>
</feature>
<keyword id="KW-0687">Ribonucleoprotein</keyword>
<keyword id="KW-0689">Ribosomal protein</keyword>
<keyword id="KW-0694">RNA-binding</keyword>
<keyword id="KW-0699">rRNA-binding</keyword>
<organism>
    <name type="scientific">Pyrococcus horikoshii (strain ATCC 700860 / DSM 12428 / JCM 9974 / NBRC 100139 / OT-3)</name>
    <dbReference type="NCBI Taxonomy" id="70601"/>
    <lineage>
        <taxon>Archaea</taxon>
        <taxon>Methanobacteriati</taxon>
        <taxon>Methanobacteriota</taxon>
        <taxon>Thermococci</taxon>
        <taxon>Thermococcales</taxon>
        <taxon>Thermococcaceae</taxon>
        <taxon>Pyrococcus</taxon>
    </lineage>
</organism>
<sequence length="116" mass="13736">MEKMVRDIGLRIQPPAEKCDDPKCPWHGHLKIHGRVFEGIVISDKPRKTVTVERQYYHYLKKYERYELRRSRIHAHNPPCINAKVGDRVLIAETRPLSKTKHFVVVAVLERAEERR</sequence>
<gene>
    <name evidence="1" type="primary">rps17</name>
    <name type="ordered locus">PH1770</name>
</gene>
<accession>O59426</accession>
<name>RS17_PYRHO</name>
<evidence type="ECO:0000255" key="1">
    <source>
        <dbReference type="HAMAP-Rule" id="MF_01345"/>
    </source>
</evidence>
<evidence type="ECO:0000305" key="2"/>